<proteinExistence type="inferred from homology"/>
<protein>
    <recommendedName>
        <fullName>NADH-ubiquinone oxidoreductase chain 4</fullName>
        <ecNumber>7.1.1.2</ecNumber>
    </recommendedName>
    <alternativeName>
        <fullName>NADH dehydrogenase subunit 4</fullName>
    </alternativeName>
</protein>
<accession>O03703</accession>
<organism>
    <name type="scientific">Cerrophidion godmani</name>
    <name type="common">Porthidium godmani</name>
    <name type="synonym">Bothrops godmani</name>
    <dbReference type="NCBI Taxonomy" id="44722"/>
    <lineage>
        <taxon>Eukaryota</taxon>
        <taxon>Metazoa</taxon>
        <taxon>Chordata</taxon>
        <taxon>Craniata</taxon>
        <taxon>Vertebrata</taxon>
        <taxon>Euteleostomi</taxon>
        <taxon>Lepidosauria</taxon>
        <taxon>Squamata</taxon>
        <taxon>Bifurcata</taxon>
        <taxon>Unidentata</taxon>
        <taxon>Episquamata</taxon>
        <taxon>Toxicofera</taxon>
        <taxon>Serpentes</taxon>
        <taxon>Colubroidea</taxon>
        <taxon>Viperidae</taxon>
        <taxon>Crotalinae</taxon>
        <taxon>Cerrophidion</taxon>
    </lineage>
</organism>
<geneLocation type="mitochondrion"/>
<reference key="1">
    <citation type="journal article" date="1996" name="Copeia">
        <title>Crotaline intergeneric relationships based on mitochondrial DNA sequence data.</title>
        <authorList>
            <person name="Kraus F."/>
            <person name="Mink D.G."/>
            <person name="Brown W.M."/>
        </authorList>
    </citation>
    <scope>NUCLEOTIDE SEQUENCE [GENOMIC DNA]</scope>
</reference>
<gene>
    <name type="primary">MT-ND4</name>
    <name type="synonym">MTND4</name>
    <name type="synonym">NADH4</name>
    <name type="synonym">ND4</name>
</gene>
<keyword id="KW-0249">Electron transport</keyword>
<keyword id="KW-0472">Membrane</keyword>
<keyword id="KW-0496">Mitochondrion</keyword>
<keyword id="KW-0520">NAD</keyword>
<keyword id="KW-0679">Respiratory chain</keyword>
<keyword id="KW-1278">Translocase</keyword>
<keyword id="KW-0812">Transmembrane</keyword>
<keyword id="KW-1133">Transmembrane helix</keyword>
<keyword id="KW-0813">Transport</keyword>
<keyword id="KW-0830">Ubiquinone</keyword>
<name>NU4M_CERGO</name>
<evidence type="ECO:0000250" key="1"/>
<evidence type="ECO:0000255" key="2"/>
<evidence type="ECO:0000305" key="3"/>
<comment type="function">
    <text evidence="1">Core subunit of the mitochondrial membrane respiratory chain NADH dehydrogenase (Complex I) that is believed to belong to the minimal assembly required for catalysis. Complex I functions in the transfer of electrons from NADH to the respiratory chain. The immediate electron acceptor for the enzyme is believed to be ubiquinone (By similarity).</text>
</comment>
<comment type="catalytic activity">
    <reaction>
        <text>a ubiquinone + NADH + 5 H(+)(in) = a ubiquinol + NAD(+) + 4 H(+)(out)</text>
        <dbReference type="Rhea" id="RHEA:29091"/>
        <dbReference type="Rhea" id="RHEA-COMP:9565"/>
        <dbReference type="Rhea" id="RHEA-COMP:9566"/>
        <dbReference type="ChEBI" id="CHEBI:15378"/>
        <dbReference type="ChEBI" id="CHEBI:16389"/>
        <dbReference type="ChEBI" id="CHEBI:17976"/>
        <dbReference type="ChEBI" id="CHEBI:57540"/>
        <dbReference type="ChEBI" id="CHEBI:57945"/>
        <dbReference type="EC" id="7.1.1.2"/>
    </reaction>
</comment>
<comment type="subcellular location">
    <subcellularLocation>
        <location evidence="1">Mitochondrion membrane</location>
        <topology evidence="1">Multi-pass membrane protein</topology>
    </subcellularLocation>
</comment>
<comment type="similarity">
    <text evidence="3">Belongs to the complex I subunit 4 family.</text>
</comment>
<dbReference type="EC" id="7.1.1.2"/>
<dbReference type="EMBL" id="U41879">
    <property type="protein sequence ID" value="AAB46638.1"/>
    <property type="molecule type" value="Genomic_DNA"/>
</dbReference>
<dbReference type="SMR" id="O03703"/>
<dbReference type="GO" id="GO:0031966">
    <property type="term" value="C:mitochondrial membrane"/>
    <property type="evidence" value="ECO:0007669"/>
    <property type="project" value="UniProtKB-SubCell"/>
</dbReference>
<dbReference type="GO" id="GO:0008137">
    <property type="term" value="F:NADH dehydrogenase (ubiquinone) activity"/>
    <property type="evidence" value="ECO:0007669"/>
    <property type="project" value="UniProtKB-EC"/>
</dbReference>
<dbReference type="GO" id="GO:0048039">
    <property type="term" value="F:ubiquinone binding"/>
    <property type="evidence" value="ECO:0007669"/>
    <property type="project" value="TreeGrafter"/>
</dbReference>
<dbReference type="GO" id="GO:0042773">
    <property type="term" value="P:ATP synthesis coupled electron transport"/>
    <property type="evidence" value="ECO:0007669"/>
    <property type="project" value="InterPro"/>
</dbReference>
<dbReference type="GO" id="GO:0015990">
    <property type="term" value="P:electron transport coupled proton transport"/>
    <property type="evidence" value="ECO:0007669"/>
    <property type="project" value="TreeGrafter"/>
</dbReference>
<dbReference type="InterPro" id="IPR003918">
    <property type="entry name" value="NADH_UbQ_OxRdtase"/>
</dbReference>
<dbReference type="InterPro" id="IPR001750">
    <property type="entry name" value="ND/Mrp_TM"/>
</dbReference>
<dbReference type="PANTHER" id="PTHR43507">
    <property type="entry name" value="NADH-UBIQUINONE OXIDOREDUCTASE CHAIN 4"/>
    <property type="match status" value="1"/>
</dbReference>
<dbReference type="PANTHER" id="PTHR43507:SF20">
    <property type="entry name" value="NADH-UBIQUINONE OXIDOREDUCTASE CHAIN 4"/>
    <property type="match status" value="1"/>
</dbReference>
<dbReference type="Pfam" id="PF00361">
    <property type="entry name" value="Proton_antipo_M"/>
    <property type="match status" value="1"/>
</dbReference>
<feature type="chain" id="PRO_0000117918" description="NADH-ubiquinone oxidoreductase chain 4">
    <location>
        <begin position="1" status="less than"/>
        <end position="231" status="greater than"/>
    </location>
</feature>
<feature type="transmembrane region" description="Helical" evidence="2">
    <location>
        <begin position="1"/>
        <end position="21"/>
    </location>
</feature>
<feature type="transmembrane region" description="Helical" evidence="2">
    <location>
        <begin position="34"/>
        <end position="54"/>
    </location>
</feature>
<feature type="transmembrane region" description="Helical" evidence="2">
    <location>
        <begin position="63"/>
        <end position="85"/>
    </location>
</feature>
<feature type="transmembrane region" description="Helical" evidence="2">
    <location>
        <begin position="89"/>
        <end position="111"/>
    </location>
</feature>
<feature type="transmembrane region" description="Helical" evidence="2">
    <location>
        <begin position="128"/>
        <end position="148"/>
    </location>
</feature>
<feature type="transmembrane region" description="Helical" evidence="2">
    <location>
        <begin position="169"/>
        <end position="189"/>
    </location>
</feature>
<feature type="transmembrane region" description="Helical" evidence="2">
    <location>
        <begin position="211"/>
        <end position="231"/>
    </location>
</feature>
<feature type="non-terminal residue">
    <location>
        <position position="1"/>
    </location>
</feature>
<feature type="non-terminal residue">
    <location>
        <position position="231"/>
    </location>
</feature>
<sequence>PIAGSMVLAAVLLKLGGYGIIRMMQTLPTTKTDMFLPFIVLALWGAILANLTCLQQTDLKSLIAYSSISHMGLVVAAIIIQTPWGLSGAMALMIAHGFTSSALFCLANTTYERTHTRILILTRGFHNILPMTTTWWLLANLMNIATPPTLNFTSELLIMSTLFNWCPTTIILLGLSMLITASYSLHMFLSTQMGPTLLNNQTEPMHSREHLLMALHLVPLMMISMKPELII</sequence>